<evidence type="ECO:0000255" key="1">
    <source>
        <dbReference type="HAMAP-Rule" id="MF_00117"/>
    </source>
</evidence>
<keyword id="KW-0143">Chaperone</keyword>
<keyword id="KW-0963">Cytoplasm</keyword>
<keyword id="KW-1015">Disulfide bond</keyword>
<keyword id="KW-0676">Redox-active center</keyword>
<keyword id="KW-0862">Zinc</keyword>
<comment type="function">
    <text evidence="1">Redox regulated molecular chaperone. Protects both thermally unfolding and oxidatively damaged proteins from irreversible aggregation. Plays an important role in the bacterial defense system toward oxidative stress.</text>
</comment>
<comment type="subcellular location">
    <subcellularLocation>
        <location evidence="1">Cytoplasm</location>
    </subcellularLocation>
</comment>
<comment type="PTM">
    <text evidence="1">Under oxidizing conditions two disulfide bonds are formed involving the reactive cysteines. Under reducing conditions zinc is bound to the reactive cysteines and the protein is inactive.</text>
</comment>
<comment type="similarity">
    <text evidence="1">Belongs to the HSP33 family.</text>
</comment>
<feature type="chain" id="PRO_1000015530" description="33 kDa chaperonin">
    <location>
        <begin position="1"/>
        <end position="294"/>
    </location>
</feature>
<feature type="disulfide bond" description="Redox-active" evidence="1">
    <location>
        <begin position="231"/>
        <end position="233"/>
    </location>
</feature>
<feature type="disulfide bond" description="Redox-active" evidence="1">
    <location>
        <begin position="264"/>
        <end position="267"/>
    </location>
</feature>
<name>HSLO_AERS4</name>
<protein>
    <recommendedName>
        <fullName evidence="1">33 kDa chaperonin</fullName>
    </recommendedName>
    <alternativeName>
        <fullName evidence="1">Heat shock protein 33 homolog</fullName>
        <shortName evidence="1">HSP33</shortName>
    </alternativeName>
</protein>
<sequence>MSNQDLLYRYLFEEYEVRGELVQLDHTYRHVVEAQSYPVQVQKLLGELLVATSLLTATLKFEGSITVQLQGDGPVRLAVINGDNNQQLRGVARYEGELPSDGKLQSLIGNGQLIITITPEQGERYQGIIALDADTLAGCLEHYFAQSEQLATKLWIRTGYHQGEPRAAGILLQALPAQSEDHSADFDHLTQLTATIKDEELFGLEAEEILYRLYHQDKVRVFDPQAVEFRCTCSRARCEGALLQIEKEEVLDMVQELGKIDMHCDYCGAQYQFDGIDVETLFSRAPDNDANKLH</sequence>
<dbReference type="EMBL" id="CP000644">
    <property type="protein sequence ID" value="ABO91733.1"/>
    <property type="molecule type" value="Genomic_DNA"/>
</dbReference>
<dbReference type="RefSeq" id="WP_005315872.1">
    <property type="nucleotide sequence ID" value="NC_009348.1"/>
</dbReference>
<dbReference type="SMR" id="A4SS61"/>
<dbReference type="STRING" id="29491.GCA_000820065_04234"/>
<dbReference type="KEGG" id="asa:ASA_3772"/>
<dbReference type="eggNOG" id="COG1281">
    <property type="taxonomic scope" value="Bacteria"/>
</dbReference>
<dbReference type="HOGENOM" id="CLU_054493_0_0_6"/>
<dbReference type="Proteomes" id="UP000000225">
    <property type="component" value="Chromosome"/>
</dbReference>
<dbReference type="GO" id="GO:0005737">
    <property type="term" value="C:cytoplasm"/>
    <property type="evidence" value="ECO:0007669"/>
    <property type="project" value="UniProtKB-SubCell"/>
</dbReference>
<dbReference type="GO" id="GO:0044183">
    <property type="term" value="F:protein folding chaperone"/>
    <property type="evidence" value="ECO:0007669"/>
    <property type="project" value="TreeGrafter"/>
</dbReference>
<dbReference type="GO" id="GO:0051082">
    <property type="term" value="F:unfolded protein binding"/>
    <property type="evidence" value="ECO:0007669"/>
    <property type="project" value="UniProtKB-UniRule"/>
</dbReference>
<dbReference type="GO" id="GO:0042026">
    <property type="term" value="P:protein refolding"/>
    <property type="evidence" value="ECO:0007669"/>
    <property type="project" value="TreeGrafter"/>
</dbReference>
<dbReference type="CDD" id="cd00498">
    <property type="entry name" value="Hsp33"/>
    <property type="match status" value="1"/>
</dbReference>
<dbReference type="Gene3D" id="1.10.287.480">
    <property type="entry name" value="helix hairpin bin"/>
    <property type="match status" value="1"/>
</dbReference>
<dbReference type="Gene3D" id="3.55.30.10">
    <property type="entry name" value="Hsp33 domain"/>
    <property type="match status" value="1"/>
</dbReference>
<dbReference type="Gene3D" id="3.90.1280.10">
    <property type="entry name" value="HSP33 redox switch-like"/>
    <property type="match status" value="1"/>
</dbReference>
<dbReference type="HAMAP" id="MF_00117">
    <property type="entry name" value="HslO"/>
    <property type="match status" value="1"/>
</dbReference>
<dbReference type="InterPro" id="IPR000397">
    <property type="entry name" value="Heat_shock_Hsp33"/>
</dbReference>
<dbReference type="InterPro" id="IPR016154">
    <property type="entry name" value="Heat_shock_Hsp33_C"/>
</dbReference>
<dbReference type="InterPro" id="IPR016153">
    <property type="entry name" value="Heat_shock_Hsp33_N"/>
</dbReference>
<dbReference type="InterPro" id="IPR023212">
    <property type="entry name" value="Hsp33_helix_hairpin_bin_dom_sf"/>
</dbReference>
<dbReference type="NCBIfam" id="NF001033">
    <property type="entry name" value="PRK00114.1"/>
    <property type="match status" value="1"/>
</dbReference>
<dbReference type="PANTHER" id="PTHR30111">
    <property type="entry name" value="33 KDA CHAPERONIN"/>
    <property type="match status" value="1"/>
</dbReference>
<dbReference type="PANTHER" id="PTHR30111:SF1">
    <property type="entry name" value="33 KDA CHAPERONIN"/>
    <property type="match status" value="1"/>
</dbReference>
<dbReference type="Pfam" id="PF01430">
    <property type="entry name" value="HSP33"/>
    <property type="match status" value="1"/>
</dbReference>
<dbReference type="PIRSF" id="PIRSF005261">
    <property type="entry name" value="Heat_shock_Hsp33"/>
    <property type="match status" value="1"/>
</dbReference>
<dbReference type="SUPFAM" id="SSF64397">
    <property type="entry name" value="Hsp33 domain"/>
    <property type="match status" value="1"/>
</dbReference>
<dbReference type="SUPFAM" id="SSF118352">
    <property type="entry name" value="HSP33 redox switch-like"/>
    <property type="match status" value="1"/>
</dbReference>
<proteinExistence type="inferred from homology"/>
<accession>A4SS61</accession>
<organism>
    <name type="scientific">Aeromonas salmonicida (strain A449)</name>
    <dbReference type="NCBI Taxonomy" id="382245"/>
    <lineage>
        <taxon>Bacteria</taxon>
        <taxon>Pseudomonadati</taxon>
        <taxon>Pseudomonadota</taxon>
        <taxon>Gammaproteobacteria</taxon>
        <taxon>Aeromonadales</taxon>
        <taxon>Aeromonadaceae</taxon>
        <taxon>Aeromonas</taxon>
    </lineage>
</organism>
<gene>
    <name evidence="1" type="primary">hslO</name>
    <name type="ordered locus">ASA_3772</name>
</gene>
<reference key="1">
    <citation type="journal article" date="2008" name="BMC Genomics">
        <title>The genome of Aeromonas salmonicida subsp. salmonicida A449: insights into the evolution of a fish pathogen.</title>
        <authorList>
            <person name="Reith M.E."/>
            <person name="Singh R.K."/>
            <person name="Curtis B."/>
            <person name="Boyd J.M."/>
            <person name="Bouevitch A."/>
            <person name="Kimball J."/>
            <person name="Munholland J."/>
            <person name="Murphy C."/>
            <person name="Sarty D."/>
            <person name="Williams J."/>
            <person name="Nash J.H."/>
            <person name="Johnson S.C."/>
            <person name="Brown L.L."/>
        </authorList>
    </citation>
    <scope>NUCLEOTIDE SEQUENCE [LARGE SCALE GENOMIC DNA]</scope>
    <source>
        <strain>A449</strain>
    </source>
</reference>